<reference evidence="13" key="1">
    <citation type="journal article" date="1994" name="DNA Res.">
        <title>Systematic sequencing of the 180 kilobase region of the Bacillus subtilis chromosome containing the replication origin.</title>
        <authorList>
            <person name="Ogasawara N."/>
            <person name="Nakai S."/>
            <person name="Yoshikawa H."/>
        </authorList>
    </citation>
    <scope>NUCLEOTIDE SEQUENCE [GENOMIC DNA]</scope>
    <source>
        <strain>168</strain>
    </source>
</reference>
<reference evidence="14" key="2">
    <citation type="journal article" date="1997" name="Nature">
        <title>The complete genome sequence of the Gram-positive bacterium Bacillus subtilis.</title>
        <authorList>
            <person name="Kunst F."/>
            <person name="Ogasawara N."/>
            <person name="Moszer I."/>
            <person name="Albertini A.M."/>
            <person name="Alloni G."/>
            <person name="Azevedo V."/>
            <person name="Bertero M.G."/>
            <person name="Bessieres P."/>
            <person name="Bolotin A."/>
            <person name="Borchert S."/>
            <person name="Borriss R."/>
            <person name="Boursier L."/>
            <person name="Brans A."/>
            <person name="Braun M."/>
            <person name="Brignell S.C."/>
            <person name="Bron S."/>
            <person name="Brouillet S."/>
            <person name="Bruschi C.V."/>
            <person name="Caldwell B."/>
            <person name="Capuano V."/>
            <person name="Carter N.M."/>
            <person name="Choi S.-K."/>
            <person name="Codani J.-J."/>
            <person name="Connerton I.F."/>
            <person name="Cummings N.J."/>
            <person name="Daniel R.A."/>
            <person name="Denizot F."/>
            <person name="Devine K.M."/>
            <person name="Duesterhoeft A."/>
            <person name="Ehrlich S.D."/>
            <person name="Emmerson P.T."/>
            <person name="Entian K.-D."/>
            <person name="Errington J."/>
            <person name="Fabret C."/>
            <person name="Ferrari E."/>
            <person name="Foulger D."/>
            <person name="Fritz C."/>
            <person name="Fujita M."/>
            <person name="Fujita Y."/>
            <person name="Fuma S."/>
            <person name="Galizzi A."/>
            <person name="Galleron N."/>
            <person name="Ghim S.-Y."/>
            <person name="Glaser P."/>
            <person name="Goffeau A."/>
            <person name="Golightly E.J."/>
            <person name="Grandi G."/>
            <person name="Guiseppi G."/>
            <person name="Guy B.J."/>
            <person name="Haga K."/>
            <person name="Haiech J."/>
            <person name="Harwood C.R."/>
            <person name="Henaut A."/>
            <person name="Hilbert H."/>
            <person name="Holsappel S."/>
            <person name="Hosono S."/>
            <person name="Hullo M.-F."/>
            <person name="Itaya M."/>
            <person name="Jones L.-M."/>
            <person name="Joris B."/>
            <person name="Karamata D."/>
            <person name="Kasahara Y."/>
            <person name="Klaerr-Blanchard M."/>
            <person name="Klein C."/>
            <person name="Kobayashi Y."/>
            <person name="Koetter P."/>
            <person name="Koningstein G."/>
            <person name="Krogh S."/>
            <person name="Kumano M."/>
            <person name="Kurita K."/>
            <person name="Lapidus A."/>
            <person name="Lardinois S."/>
            <person name="Lauber J."/>
            <person name="Lazarevic V."/>
            <person name="Lee S.-M."/>
            <person name="Levine A."/>
            <person name="Liu H."/>
            <person name="Masuda S."/>
            <person name="Mauel C."/>
            <person name="Medigue C."/>
            <person name="Medina N."/>
            <person name="Mellado R.P."/>
            <person name="Mizuno M."/>
            <person name="Moestl D."/>
            <person name="Nakai S."/>
            <person name="Noback M."/>
            <person name="Noone D."/>
            <person name="O'Reilly M."/>
            <person name="Ogawa K."/>
            <person name="Ogiwara A."/>
            <person name="Oudega B."/>
            <person name="Park S.-H."/>
            <person name="Parro V."/>
            <person name="Pohl T.M."/>
            <person name="Portetelle D."/>
            <person name="Porwollik S."/>
            <person name="Prescott A.M."/>
            <person name="Presecan E."/>
            <person name="Pujic P."/>
            <person name="Purnelle B."/>
            <person name="Rapoport G."/>
            <person name="Rey M."/>
            <person name="Reynolds S."/>
            <person name="Rieger M."/>
            <person name="Rivolta C."/>
            <person name="Rocha E."/>
            <person name="Roche B."/>
            <person name="Rose M."/>
            <person name="Sadaie Y."/>
            <person name="Sato T."/>
            <person name="Scanlan E."/>
            <person name="Schleich S."/>
            <person name="Schroeter R."/>
            <person name="Scoffone F."/>
            <person name="Sekiguchi J."/>
            <person name="Sekowska A."/>
            <person name="Seror S.J."/>
            <person name="Serror P."/>
            <person name="Shin B.-S."/>
            <person name="Soldo B."/>
            <person name="Sorokin A."/>
            <person name="Tacconi E."/>
            <person name="Takagi T."/>
            <person name="Takahashi H."/>
            <person name="Takemaru K."/>
            <person name="Takeuchi M."/>
            <person name="Tamakoshi A."/>
            <person name="Tanaka T."/>
            <person name="Terpstra P."/>
            <person name="Tognoni A."/>
            <person name="Tosato V."/>
            <person name="Uchiyama S."/>
            <person name="Vandenbol M."/>
            <person name="Vannier F."/>
            <person name="Vassarotti A."/>
            <person name="Viari A."/>
            <person name="Wambutt R."/>
            <person name="Wedler E."/>
            <person name="Wedler H."/>
            <person name="Weitzenegger T."/>
            <person name="Winters P."/>
            <person name="Wipat A."/>
            <person name="Yamamoto H."/>
            <person name="Yamane K."/>
            <person name="Yasumoto K."/>
            <person name="Yata K."/>
            <person name="Yoshida K."/>
            <person name="Yoshikawa H.-F."/>
            <person name="Zumstein E."/>
            <person name="Yoshikawa H."/>
            <person name="Danchin A."/>
        </authorList>
    </citation>
    <scope>NUCLEOTIDE SEQUENCE [LARGE SCALE GENOMIC DNA]</scope>
    <source>
        <strain>168</strain>
    </source>
</reference>
<reference key="3">
    <citation type="journal article" date="2009" name="Microbiology">
        <title>From a consortium sequence to a unified sequence: the Bacillus subtilis 168 reference genome a decade later.</title>
        <authorList>
            <person name="Barbe V."/>
            <person name="Cruveiller S."/>
            <person name="Kunst F."/>
            <person name="Lenoble P."/>
            <person name="Meurice G."/>
            <person name="Sekowska A."/>
            <person name="Vallenet D."/>
            <person name="Wang T."/>
            <person name="Moszer I."/>
            <person name="Medigue C."/>
            <person name="Danchin A."/>
        </authorList>
    </citation>
    <scope>SEQUENCE REVISION TO 177</scope>
</reference>
<reference key="4">
    <citation type="journal article" date="1992" name="J. Bacteriol.">
        <title>Cloning and sequence of Bacillus subtilis purA and guaA, involved in the conversion of IMP to AMP and GMP.</title>
        <authorList>
            <person name="Maentsaelae P."/>
            <person name="Zalkin H."/>
        </authorList>
    </citation>
    <scope>NUCLEOTIDE SEQUENCE [GENOMIC DNA] OF 425-454</scope>
    <source>
        <strain>168 / DE1</strain>
    </source>
</reference>
<reference key="5">
    <citation type="journal article" date="1995" name="Microbiology">
        <title>The Bacillus subtilis dnaC gene encodes a protein homologous to the DnaB helicase of Escherichia coli.</title>
        <authorList>
            <person name="Sakamoto Y."/>
            <person name="Nakai S."/>
            <person name="Moriya S."/>
            <person name="Yoshikawa H."/>
            <person name="Ogasawara N."/>
        </authorList>
    </citation>
    <scope>FUNCTION</scope>
    <scope>MUTAGENESIS OF ASP-42; THR-69 AND ALA-350</scope>
</reference>
<reference key="6">
    <citation type="journal article" date="2000" name="Mol. Microbiol.">
        <title>Subcellular localization of Dna-initiation proteins of Bacillus subtilis: evidence that chromosome replication begins at either edge of the nucleoids.</title>
        <authorList>
            <person name="Imai Y."/>
            <person name="Ogasawara N."/>
            <person name="Ishigo-Oka D."/>
            <person name="Kadoya R."/>
            <person name="Daito T."/>
            <person name="Moriya S."/>
        </authorList>
    </citation>
    <scope>INTERACTION WITH DNAI</scope>
    <source>
        <strain>CRK6000</strain>
    </source>
</reference>
<reference key="7">
    <citation type="journal article" date="2003" name="Mol. Cell">
        <title>A two-protein strategy for the functional loading of a cellular replicative DNA helicase.</title>
        <authorList>
            <person name="Velten M."/>
            <person name="McGovern S."/>
            <person name="Marsin S."/>
            <person name="Ehrlich S.D."/>
            <person name="Noirot P."/>
            <person name="Polard P."/>
        </authorList>
    </citation>
    <scope>FUNCTION AS A HELICASE</scope>
    <scope>SUBUNIT</scope>
    <scope>INTERACTION WITH DNAB</scope>
    <scope>INTERACTION WITH DNAI</scope>
    <scope>DNA-BINDING</scope>
</reference>
<reference key="8">
    <citation type="journal article" date="2010" name="Mol. Microbiol.">
        <title>Ordered association of helicase loader proteins with the Bacillus subtilis origin of replication in vivo.</title>
        <authorList>
            <person name="Smits W.K."/>
            <person name="Goranov A.I."/>
            <person name="Grossman A.D."/>
        </authorList>
    </citation>
    <scope>FUNCTION</scope>
    <scope>DNA REPLISOME ASSEMBLY</scope>
    <scope>DISRUPTION PHENOTYPE</scope>
</reference>
<reference key="9">
    <citation type="journal article" date="2010" name="PLoS Genet.">
        <title>The C-terminal domain of the bacterial SSB protein acts as a DNA maintenance hub at active chromosome replication forks.</title>
        <authorList>
            <person name="Costes A."/>
            <person name="Lecointe F."/>
            <person name="McGovern S."/>
            <person name="Quevillon-Cheruel S."/>
            <person name="Polard P."/>
        </authorList>
    </citation>
    <scope>SUBCELLULAR LOCATION</scope>
    <source>
        <strain>168</strain>
    </source>
</reference>
<reference key="10">
    <citation type="journal article" date="2022" name="Mol. Microbiol.">
        <title>Multiple mechanisms for overcoming lethal over-initiation of DNA replication.</title>
        <authorList>
            <person name="Anderson M.E."/>
            <person name="Smith J.L."/>
            <person name="Grossman A.D."/>
        </authorList>
    </citation>
    <scope>FUNCTION</scope>
    <source>
        <strain>168 / JH642</strain>
    </source>
</reference>
<comment type="function">
    <text evidence="3 7 12">The main replicative DNA helicase, it participates in initiation and elongation during chromosome replication (PubMed:7711902). Travels ahead of the DNA replisome, separating dsDNA into templates for DNA synthesis. The monomer has helicase activity in the presence of DnaI which is further increased by DnaB; the purified oligomeric form (probably a DnaC hexamer) does not have helicase activity in vitro, nor does the DnaC(6):DnaI(6) complex (PubMed:12718886). The direction was not determined but is probably 5'-3' (Probable) (PubMed:12718886). Helicase activity requires an rNTP and is inactive with dNTPs (PubMed:12718886). Has weak ATPase activity as a monomer, as an oligomer has ATPase activity which is stimulated by single-stranded (ss)DNA and further stimulated by DnaI and more by DnaB (PubMed:12718886).</text>
</comment>
<comment type="function">
    <text evidence="6">Deletion of a single T residue in the promoter region (a run of 8 Ts becomes 7 Ts) decreases the helicase levels by 50%, decreasing DNA replication inititation during fast growth in rich medium. Suppresses the synthetic lethality of a dnaA1-yabA deletion for growth on rich medium.</text>
</comment>
<comment type="catalytic activity">
    <reaction evidence="12">
        <text>Couples ATP hydrolysis with the unwinding of duplex DNA at the replication fork by translocating in the 5'-3' direction. This creates two antiparallel DNA single strands (ssDNA). The leading ssDNA polymer is the template for DNA polymerase III holoenzyme which synthesizes a continuous strand.</text>
        <dbReference type="EC" id="5.6.2.3"/>
    </reaction>
</comment>
<comment type="catalytic activity">
    <reaction evidence="3">
        <text>ATP + H2O = ADP + phosphate + H(+)</text>
        <dbReference type="Rhea" id="RHEA:13065"/>
        <dbReference type="ChEBI" id="CHEBI:15377"/>
        <dbReference type="ChEBI" id="CHEBI:15378"/>
        <dbReference type="ChEBI" id="CHEBI:30616"/>
        <dbReference type="ChEBI" id="CHEBI:43474"/>
        <dbReference type="ChEBI" id="CHEBI:456216"/>
        <dbReference type="EC" id="5.6.2.3"/>
    </reaction>
</comment>
<comment type="subunit">
    <text evidence="2 3 4">The DNA replisome assembles sequentially on oriC in this order; DnaA, DnaD, DnaB, DnaI-DnaC helicase (PubMed:19968790). Monomer in the absence of ATP, in its presence forms a probable homohexamer which is not active as a helicase in vitro (PubMed:12718886). Interacts separately and simultaneously with helicase loaders DnaB (PubMed:12718886) and DnaI (PubMed:10844689, PubMed:12718886). Interaction with DnaB does not require ATP (PubMed:12718886). Interaction with DnaI requires ATP, probably forms a DnaC(6):DnaI(6) complex, which is not active as a helicase (PubMed:12718886).</text>
</comment>
<comment type="interaction">
    <interactant intactId="EBI-2122822">
        <id>P37469</id>
    </interactant>
    <interactant intactId="EBI-2122847">
        <id>P06567</id>
        <label>dnaI</label>
    </interactant>
    <organismsDiffer>false</organismsDiffer>
    <experiments>4</experiments>
</comment>
<comment type="interaction">
    <interactant intactId="EBI-2122822">
        <id>P37469</id>
    </interactant>
    <interactant intactId="EBI-5255200">
        <id>O31435</id>
        <label>ybdM</label>
    </interactant>
    <organismsDiffer>false</organismsDiffer>
    <experiments>3</experiments>
</comment>
<comment type="subcellular location">
    <subcellularLocation>
        <location evidence="5">Cytoplasm</location>
        <location evidence="5">Nucleoid</location>
    </subcellularLocation>
    <text evidence="5">Localizes in tight foci to the chromosomal replication center at mid-cell; positioning does not rely on the C-terminus of SSB (ssbA) (PubMed:21170359).</text>
</comment>
<comment type="disruption phenotype">
    <text evidence="4">Essential, it cannot be deleted; in depletion experiments DNA replication stops as soon as the protein is degraded (PubMed:19968790).</text>
</comment>
<comment type="similarity">
    <text evidence="11">Belongs to the helicase family. DnaB subfamily.</text>
</comment>
<proteinExistence type="evidence at protein level"/>
<organism>
    <name type="scientific">Bacillus subtilis (strain 168)</name>
    <dbReference type="NCBI Taxonomy" id="224308"/>
    <lineage>
        <taxon>Bacteria</taxon>
        <taxon>Bacillati</taxon>
        <taxon>Bacillota</taxon>
        <taxon>Bacilli</taxon>
        <taxon>Bacillales</taxon>
        <taxon>Bacillaceae</taxon>
        <taxon>Bacillus</taxon>
    </lineage>
</organism>
<protein>
    <recommendedName>
        <fullName evidence="8">Replicative DNA helicase DnaC</fullName>
        <ecNumber evidence="12">5.6.2.3</ecNumber>
    </recommendedName>
    <alternativeName>
        <fullName evidence="11">DNA 5'-3' helicase DnaC</fullName>
    </alternativeName>
</protein>
<evidence type="ECO:0000255" key="1">
    <source>
        <dbReference type="PROSITE-ProRule" id="PRU00596"/>
    </source>
</evidence>
<evidence type="ECO:0000269" key="2">
    <source>
    </source>
</evidence>
<evidence type="ECO:0000269" key="3">
    <source>
    </source>
</evidence>
<evidence type="ECO:0000269" key="4">
    <source>
    </source>
</evidence>
<evidence type="ECO:0000269" key="5">
    <source>
    </source>
</evidence>
<evidence type="ECO:0000269" key="6">
    <source>
    </source>
</evidence>
<evidence type="ECO:0000269" key="7">
    <source>
    </source>
</evidence>
<evidence type="ECO:0000303" key="8">
    <source>
    </source>
</evidence>
<evidence type="ECO:0000303" key="9">
    <source>
    </source>
</evidence>
<evidence type="ECO:0000303" key="10">
    <source>
    </source>
</evidence>
<evidence type="ECO:0000305" key="11"/>
<evidence type="ECO:0000305" key="12">
    <source>
    </source>
</evidence>
<evidence type="ECO:0000312" key="13">
    <source>
        <dbReference type="EMBL" id="BAA05176.1"/>
    </source>
</evidence>
<evidence type="ECO:0000312" key="14">
    <source>
        <dbReference type="EMBL" id="CAB16081.2"/>
    </source>
</evidence>
<sequence>MTDLLNDRLPPQNIEAEQAVLGAIFLQPSALTLASEVLIPDDFYRMSHQKIYNAMLVLGDRGEPVDLVTVTSELANTDLLEEVGGISYLTDIANSVPTAANIEYYAKIVEEKSILRRLIRTATTIAQDGYTREDEVEDLLSEAEKTIMEVAQRKNTSAFQNIKDVLVQTYDNIEQLHNRKGDITGIPTGFTELDRMTAGFQRNDLIIVAARPSVGKTAFALNIAQNVATKTDESVAIFSLEMGAEQLVMRMLCAEGNINAQNLRTGNLTEEDWGKLTMAMGSLSNSGIYIDDTPGIRVSEIRAKCRRLKQESGLGMILIDYLQLIQGSGRSKDNRQQEVSEISRELKSIARELQVPVIALSQLSRGVEQRQDKRPMMSDIRESGSIEQDADIVAFLYRDDYYDKETENKNIIEIIIAKQRNGPVGTVSLAFVKEYNKFVNLERRFDDAGVPPGA</sequence>
<feature type="chain" id="PRO_0000102034" description="Replicative DNA helicase DnaC">
    <location>
        <begin position="1"/>
        <end position="454"/>
    </location>
</feature>
<feature type="domain" description="SF4 helicase" evidence="1">
    <location>
        <begin position="179"/>
        <end position="445"/>
    </location>
</feature>
<feature type="binding site" evidence="1">
    <location>
        <begin position="210"/>
        <end position="217"/>
    </location>
    <ligand>
        <name>ATP</name>
        <dbReference type="ChEBI" id="CHEBI:30616"/>
    </ligand>
</feature>
<feature type="mutagenesis site" description="In ts56 (dnaC56); defective in chromosome replication." evidence="7">
    <original>D</original>
    <variation>G</variation>
    <location>
        <position position="42"/>
    </location>
</feature>
<feature type="mutagenesis site" description="In dnaC30; defective in chromosome replication." evidence="7">
    <original>T</original>
    <variation>I</variation>
    <location>
        <position position="69"/>
    </location>
</feature>
<feature type="mutagenesis site" description="In ts199 (dnaC199); defective in inititation of chromosome replication." evidence="7">
    <original>A</original>
    <variation>V</variation>
    <location>
        <position position="350"/>
    </location>
</feature>
<feature type="sequence conflict" description="In Ref. 1; BAA05176." evidence="11" ref="1">
    <original>H</original>
    <variation>Y</variation>
    <location>
        <position position="177"/>
    </location>
</feature>
<feature type="sequence conflict" description="In Ref. 4; M83690." evidence="11" ref="4">
    <location>
        <position position="449"/>
    </location>
</feature>
<gene>
    <name evidence="9 13" type="primary">dnaC</name>
    <name evidence="10" type="synonym">ORF454</name>
    <name type="ordered locus">BSU40440</name>
</gene>
<keyword id="KW-0067">ATP-binding</keyword>
<keyword id="KW-0963">Cytoplasm</keyword>
<keyword id="KW-0235">DNA replication</keyword>
<keyword id="KW-0238">DNA-binding</keyword>
<keyword id="KW-0347">Helicase</keyword>
<keyword id="KW-0378">Hydrolase</keyword>
<keyword id="KW-0413">Isomerase</keyword>
<keyword id="KW-0547">Nucleotide-binding</keyword>
<keyword id="KW-0639">Primosome</keyword>
<keyword id="KW-1185">Reference proteome</keyword>
<accession>P37469</accession>
<dbReference type="EC" id="5.6.2.3" evidence="12"/>
<dbReference type="EMBL" id="D26185">
    <property type="protein sequence ID" value="BAA05176.1"/>
    <property type="molecule type" value="Genomic_DNA"/>
</dbReference>
<dbReference type="EMBL" id="AL009126">
    <property type="protein sequence ID" value="CAB16081.2"/>
    <property type="molecule type" value="Genomic_DNA"/>
</dbReference>
<dbReference type="EMBL" id="M83690">
    <property type="status" value="NOT_ANNOTATED_CDS"/>
    <property type="molecule type" value="Genomic_DNA"/>
</dbReference>
<dbReference type="PIR" id="S65970">
    <property type="entry name" value="S65970"/>
</dbReference>
<dbReference type="RefSeq" id="NP_391924.2">
    <property type="nucleotide sequence ID" value="NC_000964.3"/>
</dbReference>
<dbReference type="SMR" id="P37469"/>
<dbReference type="FunCoup" id="P37469">
    <property type="interactions" value="408"/>
</dbReference>
<dbReference type="IntAct" id="P37469">
    <property type="interactions" value="16"/>
</dbReference>
<dbReference type="STRING" id="224308.BSU40440"/>
<dbReference type="PaxDb" id="224308-BSU40440"/>
<dbReference type="EnsemblBacteria" id="CAB16081">
    <property type="protein sequence ID" value="CAB16081"/>
    <property type="gene ID" value="BSU_40440"/>
</dbReference>
<dbReference type="GeneID" id="937810"/>
<dbReference type="KEGG" id="bsu:BSU40440"/>
<dbReference type="PATRIC" id="fig|224308.179.peg.4377"/>
<dbReference type="eggNOG" id="COG0305">
    <property type="taxonomic scope" value="Bacteria"/>
</dbReference>
<dbReference type="InParanoid" id="P37469"/>
<dbReference type="OrthoDB" id="9773982at2"/>
<dbReference type="PhylomeDB" id="P37469"/>
<dbReference type="BioCyc" id="BSUB:BSU40440-MONOMER"/>
<dbReference type="Proteomes" id="UP000001570">
    <property type="component" value="Chromosome"/>
</dbReference>
<dbReference type="GO" id="GO:0005829">
    <property type="term" value="C:cytosol"/>
    <property type="evidence" value="ECO:0000318"/>
    <property type="project" value="GO_Central"/>
</dbReference>
<dbReference type="GO" id="GO:0009295">
    <property type="term" value="C:nucleoid"/>
    <property type="evidence" value="ECO:0007669"/>
    <property type="project" value="UniProtKB-SubCell"/>
</dbReference>
<dbReference type="GO" id="GO:1990077">
    <property type="term" value="C:primosome complex"/>
    <property type="evidence" value="ECO:0007669"/>
    <property type="project" value="UniProtKB-KW"/>
</dbReference>
<dbReference type="GO" id="GO:0005524">
    <property type="term" value="F:ATP binding"/>
    <property type="evidence" value="ECO:0007669"/>
    <property type="project" value="UniProtKB-KW"/>
</dbReference>
<dbReference type="GO" id="GO:0016887">
    <property type="term" value="F:ATP hydrolysis activity"/>
    <property type="evidence" value="ECO:0007669"/>
    <property type="project" value="InterPro"/>
</dbReference>
<dbReference type="GO" id="GO:0003677">
    <property type="term" value="F:DNA binding"/>
    <property type="evidence" value="ECO:0007669"/>
    <property type="project" value="UniProtKB-KW"/>
</dbReference>
<dbReference type="GO" id="GO:0003678">
    <property type="term" value="F:DNA helicase activity"/>
    <property type="evidence" value="ECO:0000318"/>
    <property type="project" value="GO_Central"/>
</dbReference>
<dbReference type="GO" id="GO:0006260">
    <property type="term" value="P:DNA replication"/>
    <property type="evidence" value="ECO:0000318"/>
    <property type="project" value="GO_Central"/>
</dbReference>
<dbReference type="GO" id="GO:0006269">
    <property type="term" value="P:DNA replication, synthesis of primer"/>
    <property type="evidence" value="ECO:0007669"/>
    <property type="project" value="UniProtKB-KW"/>
</dbReference>
<dbReference type="CDD" id="cd00984">
    <property type="entry name" value="DnaB_C"/>
    <property type="match status" value="1"/>
</dbReference>
<dbReference type="FunFam" id="1.10.860.10:FF:000001">
    <property type="entry name" value="Replicative DNA helicase"/>
    <property type="match status" value="1"/>
</dbReference>
<dbReference type="FunFam" id="3.40.50.300:FF:000076">
    <property type="entry name" value="Replicative DNA helicase"/>
    <property type="match status" value="1"/>
</dbReference>
<dbReference type="Gene3D" id="1.10.860.10">
    <property type="entry name" value="DNAb Helicase, Chain A"/>
    <property type="match status" value="1"/>
</dbReference>
<dbReference type="Gene3D" id="3.40.50.300">
    <property type="entry name" value="P-loop containing nucleotide triphosphate hydrolases"/>
    <property type="match status" value="1"/>
</dbReference>
<dbReference type="InterPro" id="IPR003593">
    <property type="entry name" value="AAA+_ATPase"/>
</dbReference>
<dbReference type="InterPro" id="IPR036185">
    <property type="entry name" value="DNA_heli_DnaB-like_N_sf"/>
</dbReference>
<dbReference type="InterPro" id="IPR007692">
    <property type="entry name" value="DNA_helicase_DnaB"/>
</dbReference>
<dbReference type="InterPro" id="IPR007694">
    <property type="entry name" value="DNA_helicase_DnaB-like_C"/>
</dbReference>
<dbReference type="InterPro" id="IPR007693">
    <property type="entry name" value="DNA_helicase_DnaB-like_N"/>
</dbReference>
<dbReference type="InterPro" id="IPR016136">
    <property type="entry name" value="DNA_helicase_N/primase_C"/>
</dbReference>
<dbReference type="InterPro" id="IPR027417">
    <property type="entry name" value="P-loop_NTPase"/>
</dbReference>
<dbReference type="NCBIfam" id="TIGR00665">
    <property type="entry name" value="DnaB"/>
    <property type="match status" value="1"/>
</dbReference>
<dbReference type="NCBIfam" id="NF004384">
    <property type="entry name" value="PRK05748.1"/>
    <property type="match status" value="1"/>
</dbReference>
<dbReference type="PANTHER" id="PTHR30153:SF2">
    <property type="entry name" value="REPLICATIVE DNA HELICASE"/>
    <property type="match status" value="1"/>
</dbReference>
<dbReference type="PANTHER" id="PTHR30153">
    <property type="entry name" value="REPLICATIVE DNA HELICASE DNAB"/>
    <property type="match status" value="1"/>
</dbReference>
<dbReference type="Pfam" id="PF00772">
    <property type="entry name" value="DnaB"/>
    <property type="match status" value="1"/>
</dbReference>
<dbReference type="Pfam" id="PF03796">
    <property type="entry name" value="DnaB_C"/>
    <property type="match status" value="1"/>
</dbReference>
<dbReference type="SMART" id="SM00382">
    <property type="entry name" value="AAA"/>
    <property type="match status" value="1"/>
</dbReference>
<dbReference type="SUPFAM" id="SSF48024">
    <property type="entry name" value="N-terminal domain of DnaB helicase"/>
    <property type="match status" value="1"/>
</dbReference>
<dbReference type="SUPFAM" id="SSF52540">
    <property type="entry name" value="P-loop containing nucleoside triphosphate hydrolases"/>
    <property type="match status" value="1"/>
</dbReference>
<dbReference type="PROSITE" id="PS51199">
    <property type="entry name" value="SF4_HELICASE"/>
    <property type="match status" value="1"/>
</dbReference>
<name>DNAC_BACSU</name>